<dbReference type="EMBL" id="M35043">
    <property type="protein sequence ID" value="AAA48716.1"/>
    <property type="molecule type" value="mRNA"/>
</dbReference>
<dbReference type="PIR" id="B37819">
    <property type="entry name" value="B37819"/>
</dbReference>
<dbReference type="SMR" id="P18860"/>
<dbReference type="FunCoup" id="P18860">
    <property type="interactions" value="8"/>
</dbReference>
<dbReference type="STRING" id="9031.ENSGALP00000052821"/>
<dbReference type="PaxDb" id="9031-ENSGALP00000024929"/>
<dbReference type="VEuPathDB" id="HostDB:geneid_396502"/>
<dbReference type="eggNOG" id="ENOG502QW11">
    <property type="taxonomic scope" value="Eukaryota"/>
</dbReference>
<dbReference type="InParanoid" id="P18860"/>
<dbReference type="OrthoDB" id="9946832at2759"/>
<dbReference type="PhylomeDB" id="P18860"/>
<dbReference type="Proteomes" id="UP000000539">
    <property type="component" value="Unassembled WGS sequence"/>
</dbReference>
<dbReference type="GO" id="GO:0005922">
    <property type="term" value="C:connexin complex"/>
    <property type="evidence" value="ECO:0000318"/>
    <property type="project" value="GO_Central"/>
</dbReference>
<dbReference type="GO" id="GO:0086076">
    <property type="term" value="F:gap junction channel activity involved in atrial cardiac muscle cell-AV node cell electrical coupling"/>
    <property type="evidence" value="ECO:0000318"/>
    <property type="project" value="GO_Central"/>
</dbReference>
<dbReference type="GO" id="GO:0086044">
    <property type="term" value="P:atrial cardiac muscle cell to AV node cell communication by electrical coupling"/>
    <property type="evidence" value="ECO:0000318"/>
    <property type="project" value="GO_Central"/>
</dbReference>
<dbReference type="GO" id="GO:0007267">
    <property type="term" value="P:cell-cell signaling"/>
    <property type="evidence" value="ECO:0000318"/>
    <property type="project" value="GO_Central"/>
</dbReference>
<dbReference type="GO" id="GO:0007507">
    <property type="term" value="P:heart development"/>
    <property type="evidence" value="ECO:0000318"/>
    <property type="project" value="GO_Central"/>
</dbReference>
<dbReference type="FunFam" id="1.20.1440.80:FF:000001">
    <property type="entry name" value="Gap junction alpha-1"/>
    <property type="match status" value="1"/>
</dbReference>
<dbReference type="Gene3D" id="1.20.1440.80">
    <property type="entry name" value="Gap junction channel protein cysteine-rich domain"/>
    <property type="match status" value="1"/>
</dbReference>
<dbReference type="InterPro" id="IPR000500">
    <property type="entry name" value="Connexin"/>
</dbReference>
<dbReference type="InterPro" id="IPR002264">
    <property type="entry name" value="Connexin40"/>
</dbReference>
<dbReference type="InterPro" id="IPR034634">
    <property type="entry name" value="Connexin_C"/>
</dbReference>
<dbReference type="InterPro" id="IPR019570">
    <property type="entry name" value="Connexin_CCC"/>
</dbReference>
<dbReference type="InterPro" id="IPR017990">
    <property type="entry name" value="Connexin_CS"/>
</dbReference>
<dbReference type="InterPro" id="IPR013092">
    <property type="entry name" value="Connexin_N"/>
</dbReference>
<dbReference type="InterPro" id="IPR038359">
    <property type="entry name" value="Connexin_N_sf"/>
</dbReference>
<dbReference type="InterPro" id="IPR031862">
    <property type="entry name" value="Cx40_C"/>
</dbReference>
<dbReference type="PANTHER" id="PTHR11984">
    <property type="entry name" value="CONNEXIN"/>
    <property type="match status" value="1"/>
</dbReference>
<dbReference type="PANTHER" id="PTHR11984:SF13">
    <property type="entry name" value="GAP JUNCTION ALPHA-5 PROTEIN"/>
    <property type="match status" value="1"/>
</dbReference>
<dbReference type="Pfam" id="PF00029">
    <property type="entry name" value="Connexin"/>
    <property type="match status" value="1"/>
</dbReference>
<dbReference type="Pfam" id="PF16791">
    <property type="entry name" value="Connexin40_C"/>
    <property type="match status" value="1"/>
</dbReference>
<dbReference type="PRINTS" id="PR00206">
    <property type="entry name" value="CONNEXIN"/>
</dbReference>
<dbReference type="PRINTS" id="PR01135">
    <property type="entry name" value="CONNEXINA5"/>
</dbReference>
<dbReference type="SMART" id="SM00037">
    <property type="entry name" value="CNX"/>
    <property type="match status" value="1"/>
</dbReference>
<dbReference type="SMART" id="SM01089">
    <property type="entry name" value="Connexin_CCC"/>
    <property type="match status" value="1"/>
</dbReference>
<dbReference type="SUPFAM" id="SSF118220">
    <property type="entry name" value="Connexin43"/>
    <property type="match status" value="1"/>
</dbReference>
<dbReference type="PROSITE" id="PS00407">
    <property type="entry name" value="CONNEXINS_1"/>
    <property type="match status" value="1"/>
</dbReference>
<dbReference type="PROSITE" id="PS00408">
    <property type="entry name" value="CONNEXINS_2"/>
    <property type="match status" value="1"/>
</dbReference>
<evidence type="ECO:0000250" key="1"/>
<evidence type="ECO:0000255" key="2"/>
<evidence type="ECO:0000256" key="3">
    <source>
        <dbReference type="SAM" id="MobiDB-lite"/>
    </source>
</evidence>
<evidence type="ECO:0000305" key="4"/>
<comment type="function">
    <text>One gap junction consists of a cluster of closely packed pairs of transmembrane channels, the connexons, through which materials of low MW diffuse from one cell to a neighboring cell.</text>
</comment>
<comment type="subunit">
    <text>A connexon is composed of a hexamer of connexins.</text>
</comment>
<comment type="subcellular location">
    <subcellularLocation>
        <location>Cell membrane</location>
        <topology>Multi-pass membrane protein</topology>
    </subcellularLocation>
    <subcellularLocation>
        <location>Cell junction</location>
        <location>Gap junction</location>
    </subcellularLocation>
</comment>
<comment type="tissue specificity">
    <text>Mostly in heart, and in the whole embryo, liver, stomach, and pectoral muscle.</text>
</comment>
<comment type="similarity">
    <text evidence="4">Belongs to the connexin family. Alpha-type (group II) subfamily.</text>
</comment>
<organism>
    <name type="scientific">Gallus gallus</name>
    <name type="common">Chicken</name>
    <dbReference type="NCBI Taxonomy" id="9031"/>
    <lineage>
        <taxon>Eukaryota</taxon>
        <taxon>Metazoa</taxon>
        <taxon>Chordata</taxon>
        <taxon>Craniata</taxon>
        <taxon>Vertebrata</taxon>
        <taxon>Euteleostomi</taxon>
        <taxon>Archelosauria</taxon>
        <taxon>Archosauria</taxon>
        <taxon>Dinosauria</taxon>
        <taxon>Saurischia</taxon>
        <taxon>Theropoda</taxon>
        <taxon>Coelurosauria</taxon>
        <taxon>Aves</taxon>
        <taxon>Neognathae</taxon>
        <taxon>Galloanserae</taxon>
        <taxon>Galliformes</taxon>
        <taxon>Phasianidae</taxon>
        <taxon>Phasianinae</taxon>
        <taxon>Gallus</taxon>
    </lineage>
</organism>
<reference key="1">
    <citation type="journal article" date="1990" name="J. Biol. Chem.">
        <title>Molecular cloning and developmental expression of two chick embryo gap junction proteins.</title>
        <authorList>
            <person name="Beyer E.C."/>
        </authorList>
    </citation>
    <scope>NUCLEOTIDE SEQUENCE [MRNA]</scope>
</reference>
<keyword id="KW-0965">Cell junction</keyword>
<keyword id="KW-1003">Cell membrane</keyword>
<keyword id="KW-0303">Gap junction</keyword>
<keyword id="KW-0472">Membrane</keyword>
<keyword id="KW-1185">Reference proteome</keyword>
<keyword id="KW-0812">Transmembrane</keyword>
<keyword id="KW-1133">Transmembrane helix</keyword>
<protein>
    <recommendedName>
        <fullName>Gap junction alpha-5 protein</fullName>
    </recommendedName>
    <alternativeName>
        <fullName>Connexin-42</fullName>
        <shortName>Cx42</shortName>
    </alternativeName>
</protein>
<name>CXA5_CHICK</name>
<feature type="initiator methionine" description="Removed" evidence="1">
    <location>
        <position position="1"/>
    </location>
</feature>
<feature type="chain" id="PRO_0000057822" description="Gap junction alpha-5 protein">
    <location>
        <begin position="2"/>
        <end position="369"/>
    </location>
</feature>
<feature type="topological domain" description="Cytoplasmic" evidence="2">
    <location>
        <begin position="2"/>
        <end position="19"/>
    </location>
</feature>
<feature type="transmembrane region" description="Helical" evidence="2">
    <location>
        <begin position="20"/>
        <end position="40"/>
    </location>
</feature>
<feature type="topological domain" description="Extracellular" evidence="2">
    <location>
        <begin position="41"/>
        <end position="76"/>
    </location>
</feature>
<feature type="transmembrane region" description="Helical" evidence="2">
    <location>
        <begin position="77"/>
        <end position="97"/>
    </location>
</feature>
<feature type="topological domain" description="Cytoplasmic" evidence="2">
    <location>
        <begin position="98"/>
        <end position="169"/>
    </location>
</feature>
<feature type="transmembrane region" description="Helical" evidence="2">
    <location>
        <begin position="170"/>
        <end position="190"/>
    </location>
</feature>
<feature type="topological domain" description="Extracellular" evidence="2">
    <location>
        <begin position="191"/>
        <end position="210"/>
    </location>
</feature>
<feature type="transmembrane region" description="Helical" evidence="2">
    <location>
        <begin position="211"/>
        <end position="231"/>
    </location>
</feature>
<feature type="topological domain" description="Cytoplasmic" evidence="2">
    <location>
        <begin position="232"/>
        <end position="369"/>
    </location>
</feature>
<feature type="region of interest" description="Disordered" evidence="3">
    <location>
        <begin position="347"/>
        <end position="369"/>
    </location>
</feature>
<sequence>MGDWSFLGEFLEEVHKHSTVVGKVWLTVLFIFRMLVLGTAAGPLWGDEQSDFMCDTQQPGCENVCYDKAFPISHVRFWVLQIIFVSTPSLVYMGHAMHTVRMEEKRKMKEAEREAQEMKNSGDTYYQQKCPVAEKTELSCWDESGGKIILRGSLLNTYVYSILIRTAMEIAFIVGQYILYGIFLETLYICQRAPCPHPVNCYVSRPTEKNVFIIFMLAVAVLSLFLSLAELYHLGWKKAKERCSRAYKPSPSTAPRRLESAPQVERAQMYTPPPDFNQCLASPNGKFISPFSNKMASQQNTANFATERVHSQEDAAGEGPFMKSSYMESPEVASECAAPALPESYFNEKRRFSKASRASSKARSDDLSV</sequence>
<gene>
    <name type="primary">GJA5</name>
</gene>
<accession>P18860</accession>
<proteinExistence type="evidence at transcript level"/>